<dbReference type="EC" id="2.7.7.4" evidence="1"/>
<dbReference type="EMBL" id="CP000855">
    <property type="protein sequence ID" value="ACJ17197.1"/>
    <property type="molecule type" value="Genomic_DNA"/>
</dbReference>
<dbReference type="RefSeq" id="WP_012572669.1">
    <property type="nucleotide sequence ID" value="NC_011529.1"/>
</dbReference>
<dbReference type="SMR" id="B6YUW9"/>
<dbReference type="STRING" id="523850.TON_1707"/>
<dbReference type="GeneID" id="7017376"/>
<dbReference type="KEGG" id="ton:TON_1707"/>
<dbReference type="PATRIC" id="fig|523850.10.peg.1721"/>
<dbReference type="eggNOG" id="arCOG04191">
    <property type="taxonomic scope" value="Archaea"/>
</dbReference>
<dbReference type="HOGENOM" id="CLU_022950_1_1_2"/>
<dbReference type="OrthoDB" id="6358at2157"/>
<dbReference type="UniPathway" id="UPA00140">
    <property type="reaction ID" value="UER00204"/>
</dbReference>
<dbReference type="Proteomes" id="UP000002727">
    <property type="component" value="Chromosome"/>
</dbReference>
<dbReference type="GO" id="GO:0005524">
    <property type="term" value="F:ATP binding"/>
    <property type="evidence" value="ECO:0007669"/>
    <property type="project" value="UniProtKB-KW"/>
</dbReference>
<dbReference type="GO" id="GO:0004781">
    <property type="term" value="F:sulfate adenylyltransferase (ATP) activity"/>
    <property type="evidence" value="ECO:0007669"/>
    <property type="project" value="UniProtKB-UniRule"/>
</dbReference>
<dbReference type="GO" id="GO:0070814">
    <property type="term" value="P:hydrogen sulfide biosynthetic process"/>
    <property type="evidence" value="ECO:0007669"/>
    <property type="project" value="UniProtKB-UniRule"/>
</dbReference>
<dbReference type="GO" id="GO:0000103">
    <property type="term" value="P:sulfate assimilation"/>
    <property type="evidence" value="ECO:0007669"/>
    <property type="project" value="UniProtKB-UniRule"/>
</dbReference>
<dbReference type="CDD" id="cd00517">
    <property type="entry name" value="ATPS"/>
    <property type="match status" value="1"/>
</dbReference>
<dbReference type="Gene3D" id="3.40.50.620">
    <property type="entry name" value="HUPs"/>
    <property type="match status" value="1"/>
</dbReference>
<dbReference type="Gene3D" id="3.10.400.10">
    <property type="entry name" value="Sulfate adenylyltransferase"/>
    <property type="match status" value="1"/>
</dbReference>
<dbReference type="HAMAP" id="MF_00066">
    <property type="entry name" value="Sulf_adenylyltr"/>
    <property type="match status" value="1"/>
</dbReference>
<dbReference type="InterPro" id="IPR025980">
    <property type="entry name" value="ATP-Sase_PUA-like_dom"/>
</dbReference>
<dbReference type="InterPro" id="IPR015947">
    <property type="entry name" value="PUA-like_sf"/>
</dbReference>
<dbReference type="InterPro" id="IPR014729">
    <property type="entry name" value="Rossmann-like_a/b/a_fold"/>
</dbReference>
<dbReference type="InterPro" id="IPR020792">
    <property type="entry name" value="SO4_adenylyltransferase_pro"/>
</dbReference>
<dbReference type="InterPro" id="IPR024951">
    <property type="entry name" value="Sulfurylase_cat_dom"/>
</dbReference>
<dbReference type="InterPro" id="IPR002650">
    <property type="entry name" value="Sulphate_adenylyltransferase"/>
</dbReference>
<dbReference type="NCBIfam" id="NF003166">
    <property type="entry name" value="PRK04149.1"/>
    <property type="match status" value="1"/>
</dbReference>
<dbReference type="NCBIfam" id="TIGR00339">
    <property type="entry name" value="sopT"/>
    <property type="match status" value="1"/>
</dbReference>
<dbReference type="PANTHER" id="PTHR43509">
    <property type="match status" value="1"/>
</dbReference>
<dbReference type="PANTHER" id="PTHR43509:SF1">
    <property type="entry name" value="SULFATE ADENYLYLTRANSFERASE"/>
    <property type="match status" value="1"/>
</dbReference>
<dbReference type="Pfam" id="PF01747">
    <property type="entry name" value="ATP-sulfurylase"/>
    <property type="match status" value="1"/>
</dbReference>
<dbReference type="Pfam" id="PF14306">
    <property type="entry name" value="PUA_2"/>
    <property type="match status" value="1"/>
</dbReference>
<dbReference type="SUPFAM" id="SSF52374">
    <property type="entry name" value="Nucleotidylyl transferase"/>
    <property type="match status" value="1"/>
</dbReference>
<dbReference type="SUPFAM" id="SSF88697">
    <property type="entry name" value="PUA domain-like"/>
    <property type="match status" value="1"/>
</dbReference>
<reference key="1">
    <citation type="journal article" date="2008" name="J. Bacteriol.">
        <title>The complete genome sequence of Thermococcus onnurineus NA1 reveals a mixed heterotrophic and carboxydotrophic metabolism.</title>
        <authorList>
            <person name="Lee H.S."/>
            <person name="Kang S.G."/>
            <person name="Bae S.S."/>
            <person name="Lim J.K."/>
            <person name="Cho Y."/>
            <person name="Kim Y.J."/>
            <person name="Jeon J.H."/>
            <person name="Cha S.-S."/>
            <person name="Kwon K.K."/>
            <person name="Kim H.-T."/>
            <person name="Park C.-J."/>
            <person name="Lee H.-W."/>
            <person name="Kim S.I."/>
            <person name="Chun J."/>
            <person name="Colwell R.R."/>
            <person name="Kim S.-J."/>
            <person name="Lee J.-H."/>
        </authorList>
    </citation>
    <scope>NUCLEOTIDE SEQUENCE [LARGE SCALE GENOMIC DNA]</scope>
    <source>
        <strain>NA1</strain>
    </source>
</reference>
<accession>B6YUW9</accession>
<evidence type="ECO:0000255" key="1">
    <source>
        <dbReference type="HAMAP-Rule" id="MF_00066"/>
    </source>
</evidence>
<sequence length="379" mass="43775">MVSKPHGGKLVRRLVAERTRERILSEQKEYPSVKIDHGRAIDLENIAHGVYSPLKGFLTSDDFQSVLDHMRLSDDTPWTIPIVIDIVEKTFDEGDAVLLYYEDIPIARMHVEEIYTYDKREFAQKVFKTTDPNHPGVAKVYSLGKYLVGGEIELLNEVPNPFAKYTLRPVETRVLFKERGWRTIVAFQTRNAPHVGHEYVQKAALTFVDGLFINPVLGKKKKGDYKDEVIIKAYETLFEHYYPKNAATLATVRYEMRYAGPREAIHHAIMRKNFGATHFIVGRDHAGVGDYYGPYEAWDMFENFPDLGITPMFIREAFYCRKCGGMVNAKICPHPKEFHVRISGTKLRKMIMAGEQPPEYMMRPEVYEVIRSFEKPFVE</sequence>
<feature type="chain" id="PRO_1000092261" description="Sulfate adenylyltransferase">
    <location>
        <begin position="1"/>
        <end position="379"/>
    </location>
</feature>
<gene>
    <name evidence="1" type="primary">sat</name>
    <name type="ordered locus">TON_1707</name>
</gene>
<protein>
    <recommendedName>
        <fullName evidence="1">Sulfate adenylyltransferase</fullName>
        <ecNumber evidence="1">2.7.7.4</ecNumber>
    </recommendedName>
    <alternativeName>
        <fullName evidence="1">ATP-sulfurylase</fullName>
    </alternativeName>
    <alternativeName>
        <fullName evidence="1">Sulfate adenylate transferase</fullName>
        <shortName evidence="1">SAT</shortName>
    </alternativeName>
</protein>
<keyword id="KW-0067">ATP-binding</keyword>
<keyword id="KW-0547">Nucleotide-binding</keyword>
<keyword id="KW-0548">Nucleotidyltransferase</keyword>
<keyword id="KW-0808">Transferase</keyword>
<organism>
    <name type="scientific">Thermococcus onnurineus (strain NA1)</name>
    <dbReference type="NCBI Taxonomy" id="523850"/>
    <lineage>
        <taxon>Archaea</taxon>
        <taxon>Methanobacteriati</taxon>
        <taxon>Methanobacteriota</taxon>
        <taxon>Thermococci</taxon>
        <taxon>Thermococcales</taxon>
        <taxon>Thermococcaceae</taxon>
        <taxon>Thermococcus</taxon>
    </lineage>
</organism>
<comment type="catalytic activity">
    <reaction evidence="1">
        <text>sulfate + ATP + H(+) = adenosine 5'-phosphosulfate + diphosphate</text>
        <dbReference type="Rhea" id="RHEA:18133"/>
        <dbReference type="ChEBI" id="CHEBI:15378"/>
        <dbReference type="ChEBI" id="CHEBI:16189"/>
        <dbReference type="ChEBI" id="CHEBI:30616"/>
        <dbReference type="ChEBI" id="CHEBI:33019"/>
        <dbReference type="ChEBI" id="CHEBI:58243"/>
        <dbReference type="EC" id="2.7.7.4"/>
    </reaction>
</comment>
<comment type="pathway">
    <text evidence="1">Sulfur metabolism; hydrogen sulfide biosynthesis; sulfite from sulfate: step 1/3.</text>
</comment>
<comment type="similarity">
    <text evidence="1">Belongs to the sulfate adenylyltransferase family.</text>
</comment>
<name>SAT_THEON</name>
<proteinExistence type="inferred from homology"/>